<gene>
    <name type="primary">ADORA2B</name>
</gene>
<feature type="chain" id="PRO_0000069002" description="Adenosine receptor A2b">
    <location>
        <begin position="1"/>
        <end position="332"/>
    </location>
</feature>
<feature type="topological domain" description="Extracellular" evidence="1">
    <location>
        <begin position="1"/>
        <end position="8"/>
    </location>
</feature>
<feature type="transmembrane region" description="Helical; Name=1" evidence="1">
    <location>
        <begin position="9"/>
        <end position="33"/>
    </location>
</feature>
<feature type="topological domain" description="Cytoplasmic" evidence="1">
    <location>
        <begin position="34"/>
        <end position="43"/>
    </location>
</feature>
<feature type="transmembrane region" description="Helical; Name=2" evidence="1">
    <location>
        <begin position="44"/>
        <end position="67"/>
    </location>
</feature>
<feature type="topological domain" description="Extracellular" evidence="1">
    <location>
        <begin position="68"/>
        <end position="78"/>
    </location>
</feature>
<feature type="transmembrane region" description="Helical; Name=3" evidence="1">
    <location>
        <begin position="79"/>
        <end position="101"/>
    </location>
</feature>
<feature type="topological domain" description="Cytoplasmic" evidence="1">
    <location>
        <begin position="102"/>
        <end position="121"/>
    </location>
</feature>
<feature type="transmembrane region" description="Helical; Name=4" evidence="1">
    <location>
        <begin position="122"/>
        <end position="144"/>
    </location>
</feature>
<feature type="topological domain" description="Extracellular" evidence="1">
    <location>
        <begin position="145"/>
        <end position="177"/>
    </location>
</feature>
<feature type="transmembrane region" description="Helical; Name=5" evidence="1">
    <location>
        <begin position="178"/>
        <end position="202"/>
    </location>
</feature>
<feature type="topological domain" description="Cytoplasmic" evidence="1">
    <location>
        <begin position="203"/>
        <end position="234"/>
    </location>
</feature>
<feature type="transmembrane region" description="Helical; Name=6" evidence="1">
    <location>
        <begin position="235"/>
        <end position="258"/>
    </location>
</feature>
<feature type="topological domain" description="Extracellular" evidence="1">
    <location>
        <begin position="259"/>
        <end position="266"/>
    </location>
</feature>
<feature type="transmembrane region" description="Helical; Name=7" evidence="1">
    <location>
        <begin position="267"/>
        <end position="290"/>
    </location>
</feature>
<feature type="topological domain" description="Cytoplasmic" evidence="1">
    <location>
        <begin position="291"/>
        <end position="332"/>
    </location>
</feature>
<feature type="binding site" evidence="2">
    <location>
        <position position="173"/>
    </location>
    <ligand>
        <name>adenosine</name>
        <dbReference type="ChEBI" id="CHEBI:16335"/>
        <note>agonist</note>
    </ligand>
</feature>
<feature type="binding site" evidence="2">
    <location>
        <position position="253"/>
    </location>
    <ligand>
        <name>adenosine</name>
        <dbReference type="ChEBI" id="CHEBI:16335"/>
        <note>agonist</note>
    </ligand>
</feature>
<feature type="binding site" evidence="2">
    <location>
        <position position="278"/>
    </location>
    <ligand>
        <name>adenosine</name>
        <dbReference type="ChEBI" id="CHEBI:16335"/>
        <note>agonist</note>
    </ligand>
</feature>
<feature type="binding site" evidence="2">
    <location>
        <position position="279"/>
    </location>
    <ligand>
        <name>adenosine</name>
        <dbReference type="ChEBI" id="CHEBI:16335"/>
        <note>agonist</note>
    </ligand>
</feature>
<feature type="lipid moiety-binding region" description="S-palmitoyl cysteine" evidence="3">
    <location>
        <position position="310"/>
    </location>
</feature>
<feature type="glycosylation site" description="N-linked (GlcNAc...) asparagine" evidence="3">
    <location>
        <position position="152"/>
    </location>
</feature>
<feature type="glycosylation site" description="N-linked (GlcNAc...) asparagine" evidence="3">
    <location>
        <position position="162"/>
    </location>
</feature>
<feature type="disulfide bond" evidence="4">
    <location>
        <begin position="78"/>
        <end position="170"/>
    </location>
</feature>
<dbReference type="EMBL" id="AY313204">
    <property type="protein sequence ID" value="AAQ82905.1"/>
    <property type="molecule type" value="mRNA"/>
</dbReference>
<dbReference type="RefSeq" id="NP_001002944.1">
    <property type="nucleotide sequence ID" value="NM_001002944.1"/>
</dbReference>
<dbReference type="SMR" id="Q6W3F4"/>
<dbReference type="FunCoup" id="Q6W3F4">
    <property type="interactions" value="257"/>
</dbReference>
<dbReference type="STRING" id="9615.ENSCAFP00000063467"/>
<dbReference type="GlyCosmos" id="Q6W3F4">
    <property type="glycosylation" value="2 sites, No reported glycans"/>
</dbReference>
<dbReference type="PaxDb" id="9612-ENSCAFP00000026712"/>
<dbReference type="GeneID" id="403410"/>
<dbReference type="KEGG" id="cfa:403410"/>
<dbReference type="CTD" id="136"/>
<dbReference type="eggNOG" id="KOG3656">
    <property type="taxonomic scope" value="Eukaryota"/>
</dbReference>
<dbReference type="InParanoid" id="Q6W3F4"/>
<dbReference type="OrthoDB" id="5986190at2759"/>
<dbReference type="Proteomes" id="UP000002254">
    <property type="component" value="Unplaced"/>
</dbReference>
<dbReference type="Proteomes" id="UP000694429">
    <property type="component" value="Unplaced"/>
</dbReference>
<dbReference type="Proteomes" id="UP000694542">
    <property type="component" value="Unplaced"/>
</dbReference>
<dbReference type="Proteomes" id="UP000805418">
    <property type="component" value="Unplaced"/>
</dbReference>
<dbReference type="GO" id="GO:0005886">
    <property type="term" value="C:plasma membrane"/>
    <property type="evidence" value="ECO:0000318"/>
    <property type="project" value="GO_Central"/>
</dbReference>
<dbReference type="GO" id="GO:0001609">
    <property type="term" value="F:G protein-coupled adenosine receptor activity"/>
    <property type="evidence" value="ECO:0007669"/>
    <property type="project" value="InterPro"/>
</dbReference>
<dbReference type="GO" id="GO:0004930">
    <property type="term" value="F:G protein-coupled receptor activity"/>
    <property type="evidence" value="ECO:0000318"/>
    <property type="project" value="GO_Central"/>
</dbReference>
<dbReference type="GO" id="GO:0007189">
    <property type="term" value="P:adenylate cyclase-activating G protein-coupled receptor signaling pathway"/>
    <property type="evidence" value="ECO:0000318"/>
    <property type="project" value="GO_Central"/>
</dbReference>
<dbReference type="GO" id="GO:0042311">
    <property type="term" value="P:vasodilation"/>
    <property type="evidence" value="ECO:0000318"/>
    <property type="project" value="GO_Central"/>
</dbReference>
<dbReference type="CDD" id="cd15069">
    <property type="entry name" value="7tmA_Adenosine_R_A2B"/>
    <property type="match status" value="1"/>
</dbReference>
<dbReference type="FunFam" id="1.20.1070.10:FF:000061">
    <property type="entry name" value="Adenosine receptor A2"/>
    <property type="match status" value="1"/>
</dbReference>
<dbReference type="Gene3D" id="1.20.1070.10">
    <property type="entry name" value="Rhodopsin 7-helix transmembrane proteins"/>
    <property type="match status" value="1"/>
</dbReference>
<dbReference type="InterPro" id="IPR001435">
    <property type="entry name" value="Adeno_A2B_rcpt"/>
</dbReference>
<dbReference type="InterPro" id="IPR001634">
    <property type="entry name" value="Adenosn_rcpt"/>
</dbReference>
<dbReference type="InterPro" id="IPR000276">
    <property type="entry name" value="GPCR_Rhodpsn"/>
</dbReference>
<dbReference type="InterPro" id="IPR017452">
    <property type="entry name" value="GPCR_Rhodpsn_7TM"/>
</dbReference>
<dbReference type="PANTHER" id="PTHR24246:SF18">
    <property type="entry name" value="ADENOSINE RECEPTOR A2B"/>
    <property type="match status" value="1"/>
</dbReference>
<dbReference type="PANTHER" id="PTHR24246">
    <property type="entry name" value="OLFACTORY RECEPTOR AND ADENOSINE RECEPTOR"/>
    <property type="match status" value="1"/>
</dbReference>
<dbReference type="Pfam" id="PF00001">
    <property type="entry name" value="7tm_1"/>
    <property type="match status" value="1"/>
</dbReference>
<dbReference type="PRINTS" id="PR00554">
    <property type="entry name" value="ADENOSINA2BR"/>
</dbReference>
<dbReference type="PRINTS" id="PR00424">
    <property type="entry name" value="ADENOSINER"/>
</dbReference>
<dbReference type="PRINTS" id="PR00237">
    <property type="entry name" value="GPCRRHODOPSN"/>
</dbReference>
<dbReference type="SMART" id="SM01381">
    <property type="entry name" value="7TM_GPCR_Srsx"/>
    <property type="match status" value="1"/>
</dbReference>
<dbReference type="SUPFAM" id="SSF81321">
    <property type="entry name" value="Family A G protein-coupled receptor-like"/>
    <property type="match status" value="1"/>
</dbReference>
<dbReference type="PROSITE" id="PS00237">
    <property type="entry name" value="G_PROTEIN_RECEP_F1_1"/>
    <property type="match status" value="1"/>
</dbReference>
<dbReference type="PROSITE" id="PS50262">
    <property type="entry name" value="G_PROTEIN_RECEP_F1_2"/>
    <property type="match status" value="1"/>
</dbReference>
<sequence>MQLETQDALYVALELAIAALSVAGNVLVCAAVGTSSALQTPTNYFLVSLAAADVAVGLFAIPFAITISLGFCTDFHSCLFLACFVLVLTQSSIFSLLAVAVDRYLAIRVPLRYKSLVTGTRARGVIAVLWVLAFGIGLTPFLGWNSKDSATNCTEPWDGTTNESCCLVKCLFENVVPMSYMVYFNFFGCVLPPLLIMLVIYIKIFMVACKQLQRTELVDHSRTVIQREIHAAKSLAMIVGIFALCWLPVHAINCVTLFQPARAKDKPKWAMNMAILLSHASSVVNPIVYAYRNRDFRYTFHKIISRYVLCQTDVLKSGNGQAGTQSALDVGL</sequence>
<name>AA2BR_CANLF</name>
<comment type="function">
    <text evidence="1">Receptor for adenosine. The activity of this receptor is mediated by G proteins which activate adenylyl cyclase (By similarity).</text>
</comment>
<comment type="subcellular location">
    <subcellularLocation>
        <location>Cell membrane</location>
        <topology>Multi-pass membrane protein</topology>
    </subcellularLocation>
</comment>
<comment type="similarity">
    <text evidence="4">Belongs to the G-protein coupled receptor 1 family.</text>
</comment>
<reference key="1">
    <citation type="submission" date="2003-06" db="EMBL/GenBank/DDBJ databases">
        <title>Reduction in infarct size by CPX and the renal modulating agent BG 9928: evidence for involvement of A2B adenosine receptors.</title>
        <authorList>
            <person name="Auchampach J.A."/>
            <person name="Jin X."/>
            <person name="Wang J."/>
            <person name="Moore J."/>
            <person name="Wan T.C."/>
            <person name="Keckler L."/>
            <person name="Ge Z.-D."/>
            <person name="Smits G."/>
            <person name="Whalley E."/>
            <person name="Ticho B."/>
            <person name="Gross G.J."/>
        </authorList>
    </citation>
    <scope>NUCLEOTIDE SEQUENCE [MRNA]</scope>
</reference>
<organism>
    <name type="scientific">Canis lupus familiaris</name>
    <name type="common">Dog</name>
    <name type="synonym">Canis familiaris</name>
    <dbReference type="NCBI Taxonomy" id="9615"/>
    <lineage>
        <taxon>Eukaryota</taxon>
        <taxon>Metazoa</taxon>
        <taxon>Chordata</taxon>
        <taxon>Craniata</taxon>
        <taxon>Vertebrata</taxon>
        <taxon>Euteleostomi</taxon>
        <taxon>Mammalia</taxon>
        <taxon>Eutheria</taxon>
        <taxon>Laurasiatheria</taxon>
        <taxon>Carnivora</taxon>
        <taxon>Caniformia</taxon>
        <taxon>Canidae</taxon>
        <taxon>Canis</taxon>
    </lineage>
</organism>
<accession>Q6W3F4</accession>
<evidence type="ECO:0000250" key="1"/>
<evidence type="ECO:0000250" key="2">
    <source>
        <dbReference type="UniProtKB" id="P29274"/>
    </source>
</evidence>
<evidence type="ECO:0000255" key="3"/>
<evidence type="ECO:0000255" key="4">
    <source>
        <dbReference type="PROSITE-ProRule" id="PRU00521"/>
    </source>
</evidence>
<protein>
    <recommendedName>
        <fullName>Adenosine receptor A2b</fullName>
    </recommendedName>
</protein>
<keyword id="KW-1003">Cell membrane</keyword>
<keyword id="KW-1015">Disulfide bond</keyword>
<keyword id="KW-0297">G-protein coupled receptor</keyword>
<keyword id="KW-0325">Glycoprotein</keyword>
<keyword id="KW-0449">Lipoprotein</keyword>
<keyword id="KW-0472">Membrane</keyword>
<keyword id="KW-0564">Palmitate</keyword>
<keyword id="KW-0675">Receptor</keyword>
<keyword id="KW-1185">Reference proteome</keyword>
<keyword id="KW-0807">Transducer</keyword>
<keyword id="KW-0812">Transmembrane</keyword>
<keyword id="KW-1133">Transmembrane helix</keyword>
<proteinExistence type="evidence at transcript level"/>